<evidence type="ECO:0000250" key="1"/>
<evidence type="ECO:0000250" key="2">
    <source>
        <dbReference type="UniProtKB" id="Q8K3R3"/>
    </source>
</evidence>
<evidence type="ECO:0000250" key="3">
    <source>
        <dbReference type="UniProtKB" id="Q9BRC7"/>
    </source>
</evidence>
<evidence type="ECO:0000255" key="4">
    <source>
        <dbReference type="PROSITE-ProRule" id="PRU00041"/>
    </source>
</evidence>
<evidence type="ECO:0000255" key="5">
    <source>
        <dbReference type="PROSITE-ProRule" id="PRU00145"/>
    </source>
</evidence>
<evidence type="ECO:0000255" key="6">
    <source>
        <dbReference type="PROSITE-ProRule" id="PRU00270"/>
    </source>
</evidence>
<evidence type="ECO:0000255" key="7">
    <source>
        <dbReference type="PROSITE-ProRule" id="PRU00271"/>
    </source>
</evidence>
<evidence type="ECO:0000255" key="8">
    <source>
        <dbReference type="PROSITE-ProRule" id="PRU00448"/>
    </source>
</evidence>
<evidence type="ECO:0000305" key="9">
    <source>
    </source>
</evidence>
<evidence type="ECO:0000305" key="10">
    <source>
    </source>
</evidence>
<sequence length="791" mass="90581">MAYLLQGRLPINQDLLLMQKGTMMRKVRSKSWKKLRFFRLQDDGMTVWHARQAGGRAKPSFSISDVDTVREDHESELLRNLAEEFPLEQGFTIVFHGRRSNLDLVANSVQEAQTWMQGLQLLVGFVTNMDQQERLDQWLSDWFQRGDKNQDGRMSFGEVQRLLHLMNVEMDQEYAFQLFQTADTSQSGTLEGEEFVEFYKSLTQRPEVQELFEKFSSDGQKLTLLEFVDFLQEEQKEGERASDLALELIDRYEPSESGKLRHVLSMDGFLGYLCSKDGDIFNPTCHPLYQDMTQPLNHYYINSSHNTYLVGDQLCGQSSVEGYIRALKRGCRCVEVDIWDGPSGEPIVYHGHTLTSRIPFKDVVAAIGQYAFQTSDYPVILSLENHCSWEQQEIIVRHLTEILGDQLLTTALDGQPPTQLPSPEDLRGKILVKGKKLMLEEEEEEPEAELEAEQEARLDLEAQLESEPQDLSPRSEDKKKVVMCPLLCRPLCCQIMAQAPISKPGLLLFPKQKPKAILCPALSALVVYLKAVTFYSFTHSREHYHFYETSSFSETKAKSLIKEAGDEFVQHNAWQLSRVYPSGLRTDSSNYNPQEFWNAGCQMVAMNMQTAGLEMDLCDGLFRQNAGCGYVLKPDFLRDAQSSFHPERPISPFKAQTLIIQVISGQQLPKVDNTKEQSIVDPLVRVEIFGVRPDTTRQETSYVENNGFNPYWGQTLCFRILVPELALLRFVVKDYDWKSRNDFIGQYTLPWSCMQQGYRHIHLLSKDGLSLHPASIFVHICTQEVSEEAES</sequence>
<organism>
    <name type="scientific">Bos taurus</name>
    <name type="common">Bovine</name>
    <dbReference type="NCBI Taxonomy" id="9913"/>
    <lineage>
        <taxon>Eukaryota</taxon>
        <taxon>Metazoa</taxon>
        <taxon>Chordata</taxon>
        <taxon>Craniata</taxon>
        <taxon>Vertebrata</taxon>
        <taxon>Euteleostomi</taxon>
        <taxon>Mammalia</taxon>
        <taxon>Eutheria</taxon>
        <taxon>Laurasiatheria</taxon>
        <taxon>Artiodactyla</taxon>
        <taxon>Ruminantia</taxon>
        <taxon>Pecora</taxon>
        <taxon>Bovidae</taxon>
        <taxon>Bovinae</taxon>
        <taxon>Bos</taxon>
    </lineage>
</organism>
<reference key="1">
    <citation type="submission" date="2006-01" db="EMBL/GenBank/DDBJ databases">
        <authorList>
            <consortium name="NIH - Mammalian Gene Collection (MGC) project"/>
        </authorList>
    </citation>
    <scope>NUCLEOTIDE SEQUENCE [LARGE SCALE MRNA]</scope>
    <source>
        <strain>Crossbred X Angus</strain>
        <tissue>Liver</tissue>
    </source>
</reference>
<reference key="2">
    <citation type="journal article" date="1989" name="Eur. J. Biochem.">
        <title>A novel inositol-phospholipid-specific phospholipase C. Rapid purification and characterization.</title>
        <authorList>
            <person name="Meldrum E."/>
            <person name="Katan M."/>
            <person name="Parker P."/>
        </authorList>
    </citation>
    <scope>PROTEIN SEQUENCE OF 560-584 AND 685-696</scope>
</reference>
<reference key="3">
    <citation type="journal article" date="2004" name="Biochem. Biophys. Res. Commun.">
        <title>Phospholipase C delta-type consists of three isozymes: bovine PLCdelta2 is a homologue of human/mouse PLCdelta4.</title>
        <authorList>
            <person name="Irino Y."/>
            <person name="Cho H."/>
            <person name="Nakamura Y."/>
            <person name="Nakahara M."/>
            <person name="Furutani M."/>
            <person name="Suh P.-G."/>
            <person name="Takenawa T."/>
            <person name="Fukami K."/>
        </authorList>
    </citation>
    <scope>IDENTIFICATION</scope>
</reference>
<accession>P21671</accession>
<accession>Q2KIZ7</accession>
<proteinExistence type="evidence at protein level"/>
<protein>
    <recommendedName>
        <fullName>1-phosphatidylinositol 4,5-bisphosphate phosphodiesterase delta-4</fullName>
        <ecNumber evidence="3">3.1.4.11</ecNumber>
    </recommendedName>
    <alternativeName>
        <fullName>PLC-85</fullName>
    </alternativeName>
    <alternativeName>
        <fullName>Phosphoinositide phospholipase C-delta-4</fullName>
    </alternativeName>
    <alternativeName>
        <fullName>Phospholipase C-delta-2</fullName>
        <shortName>PLC-delta-2</shortName>
    </alternativeName>
    <alternativeName>
        <fullName>Phospholipase C-delta-4</fullName>
        <shortName>PLC-delta-4</shortName>
    </alternativeName>
</protein>
<keyword id="KW-0106">Calcium</keyword>
<keyword id="KW-0963">Cytoplasm</keyword>
<keyword id="KW-0903">Direct protein sequencing</keyword>
<keyword id="KW-0256">Endoplasmic reticulum</keyword>
<keyword id="KW-0378">Hydrolase</keyword>
<keyword id="KW-0442">Lipid degradation</keyword>
<keyword id="KW-0443">Lipid metabolism</keyword>
<keyword id="KW-0472">Membrane</keyword>
<keyword id="KW-0479">Metal-binding</keyword>
<keyword id="KW-0539">Nucleus</keyword>
<keyword id="KW-1185">Reference proteome</keyword>
<keyword id="KW-0677">Repeat</keyword>
<keyword id="KW-0807">Transducer</keyword>
<comment type="function">
    <text evidence="1">Hydrolyzes the phosphatidylinositol 4,5-bisphosphate (PIP2) to generate 2 second messenger molecules diacylglycerol (DAG) and inositol 1,4,5-trisphosphate (IP3). DAG mediates the activation of protein kinase C (PKC), while IP3 releases Ca(2+) from intracellular stores. Required for acrosome reaction in sperm during fertilization, probably by acting as an important enzyme for intracellular Ca(2+) mobilization in the zona pellucida-induced acrosome reaction. May play a role in cell growth. Modulates the liver regeneration in cooperation with nuclear PKC. Overexpression up-regulates the Erk signaling pathway and proliferation (By similarity).</text>
</comment>
<comment type="catalytic activity">
    <reaction evidence="3">
        <text>a 1,2-diacyl-sn-glycero-3-phospho-(1D-myo-inositol-4,5-bisphosphate) + H2O = 1D-myo-inositol 1,4,5-trisphosphate + a 1,2-diacyl-sn-glycerol + H(+)</text>
        <dbReference type="Rhea" id="RHEA:33179"/>
        <dbReference type="ChEBI" id="CHEBI:15377"/>
        <dbReference type="ChEBI" id="CHEBI:15378"/>
        <dbReference type="ChEBI" id="CHEBI:17815"/>
        <dbReference type="ChEBI" id="CHEBI:58456"/>
        <dbReference type="ChEBI" id="CHEBI:203600"/>
        <dbReference type="EC" id="3.1.4.11"/>
    </reaction>
    <physiologicalReaction direction="left-to-right" evidence="3">
        <dbReference type="Rhea" id="RHEA:33180"/>
    </physiologicalReaction>
</comment>
<comment type="catalytic activity">
    <reaction evidence="3">
        <text>a 1,2-diacyl-sn-glycero-3-phospho-(1D-myo-inositol) + H2O = 1D-myo-inositol 1-phosphate + a 1,2-diacyl-sn-glycerol + H(+)</text>
        <dbReference type="Rhea" id="RHEA:43484"/>
        <dbReference type="ChEBI" id="CHEBI:15377"/>
        <dbReference type="ChEBI" id="CHEBI:15378"/>
        <dbReference type="ChEBI" id="CHEBI:17815"/>
        <dbReference type="ChEBI" id="CHEBI:57880"/>
        <dbReference type="ChEBI" id="CHEBI:58433"/>
    </reaction>
    <physiologicalReaction direction="left-to-right" evidence="3">
        <dbReference type="Rhea" id="RHEA:43485"/>
    </physiologicalReaction>
</comment>
<comment type="cofactor">
    <cofactor evidence="4">
        <name>Ca(2+)</name>
        <dbReference type="ChEBI" id="CHEBI:29108"/>
    </cofactor>
    <text evidence="1">Binds 5 Ca(2+) ions per subunit. Two of the Ca(2+) ions are bound to the C2 domain.</text>
</comment>
<comment type="subunit">
    <text evidence="2 3">Interacts with GRIP1 (By similarity). Interacts (via GBA motif) with guanine nucleotide-binding protein G(i) alpha subunit GNAI3 (inactive GDP-bound form); low-affinity interaction (By similarity).</text>
</comment>
<comment type="subcellular location">
    <subcellularLocation>
        <location evidence="1">Membrane</location>
        <topology evidence="1">Peripheral membrane protein</topology>
    </subcellularLocation>
    <subcellularLocation>
        <location evidence="1">Nucleus</location>
    </subcellularLocation>
    <subcellularLocation>
        <location evidence="1">Cytoplasm</location>
    </subcellularLocation>
    <subcellularLocation>
        <location evidence="1">Endoplasmic reticulum</location>
    </subcellularLocation>
    <text evidence="1">Localizes primarily to intracellular membranes mostly to the endoplasmic reticulum.</text>
</comment>
<comment type="domain">
    <text evidence="1">The PDZ-binding motif mediates the interaction with GRIP1.</text>
</comment>
<comment type="domain">
    <text evidence="1">The C2 domain mediates pre-localization to the membrane prior to Ca(2+) import and non-selective Ca(2+)-mediated targeting to various cellular membranes.</text>
</comment>
<comment type="domain">
    <text evidence="1">The PH domain is not a critical determinant of the membrane localization.</text>
</comment>
<comment type="domain">
    <text evidence="3">The GBA (G-alpha binding and activating) motif mediates binding to the alpha subunits of guanine nucleotide-binding proteins (G proteins).</text>
</comment>
<comment type="caution">
    <text evidence="9 10">Was initially (PubMed:2753038) named PLCD2 and was thought to be a new member of the PLC-delta family. It was later shown that it corresponds to PLCD4 (PubMed:15219862).</text>
</comment>
<feature type="chain" id="PRO_0000088508" description="1-phosphatidylinositol 4,5-bisphosphate phosphodiesterase delta-4">
    <location>
        <begin position="1"/>
        <end position="791"/>
    </location>
</feature>
<feature type="domain" description="PH" evidence="5">
    <location>
        <begin position="16"/>
        <end position="124"/>
    </location>
</feature>
<feature type="domain" description="EF-hand 1" evidence="8">
    <location>
        <begin position="134"/>
        <end position="169"/>
    </location>
</feature>
<feature type="domain" description="EF-hand 2" evidence="8">
    <location>
        <begin position="170"/>
        <end position="205"/>
    </location>
</feature>
<feature type="domain" description="EF-hand 3" evidence="8">
    <location>
        <begin position="207"/>
        <end position="237"/>
    </location>
</feature>
<feature type="domain" description="PI-PLC X-box" evidence="6">
    <location>
        <begin position="290"/>
        <end position="435"/>
    </location>
</feature>
<feature type="domain" description="PI-PLC Y-box" evidence="7">
    <location>
        <begin position="522"/>
        <end position="638"/>
    </location>
</feature>
<feature type="domain" description="C2" evidence="4">
    <location>
        <begin position="638"/>
        <end position="765"/>
    </location>
</feature>
<feature type="region of interest" description="Substrate binding" evidence="1">
    <location>
        <begin position="26"/>
        <end position="53"/>
    </location>
</feature>
<feature type="short sequence motif" description="GBA" evidence="3">
    <location>
        <begin position="213"/>
        <end position="243"/>
    </location>
</feature>
<feature type="short sequence motif" description="PDZ-binding">
    <location>
        <begin position="760"/>
        <end position="763"/>
    </location>
</feature>
<feature type="active site" evidence="6">
    <location>
        <position position="305"/>
    </location>
</feature>
<feature type="active site" evidence="6">
    <location>
        <position position="350"/>
    </location>
</feature>
<feature type="binding site" evidence="8">
    <location>
        <position position="147"/>
    </location>
    <ligand>
        <name>Ca(2+)</name>
        <dbReference type="ChEBI" id="CHEBI:29108"/>
        <label>1</label>
    </ligand>
</feature>
<feature type="binding site" evidence="8">
    <location>
        <position position="149"/>
    </location>
    <ligand>
        <name>Ca(2+)</name>
        <dbReference type="ChEBI" id="CHEBI:29108"/>
        <label>1</label>
    </ligand>
</feature>
<feature type="binding site" evidence="8">
    <location>
        <position position="151"/>
    </location>
    <ligand>
        <name>Ca(2+)</name>
        <dbReference type="ChEBI" id="CHEBI:29108"/>
        <label>1</label>
    </ligand>
</feature>
<feature type="binding site" evidence="8">
    <location>
        <position position="153"/>
    </location>
    <ligand>
        <name>Ca(2+)</name>
        <dbReference type="ChEBI" id="CHEBI:29108"/>
        <label>1</label>
    </ligand>
</feature>
<feature type="binding site" evidence="8">
    <location>
        <position position="158"/>
    </location>
    <ligand>
        <name>Ca(2+)</name>
        <dbReference type="ChEBI" id="CHEBI:29108"/>
        <label>1</label>
    </ligand>
</feature>
<feature type="binding site" evidence="8">
    <location>
        <position position="183"/>
    </location>
    <ligand>
        <name>Ca(2+)</name>
        <dbReference type="ChEBI" id="CHEBI:29108"/>
        <label>2</label>
    </ligand>
</feature>
<feature type="binding site" evidence="8">
    <location>
        <position position="185"/>
    </location>
    <ligand>
        <name>Ca(2+)</name>
        <dbReference type="ChEBI" id="CHEBI:29108"/>
        <label>2</label>
    </ligand>
</feature>
<feature type="binding site" evidence="8">
    <location>
        <position position="187"/>
    </location>
    <ligand>
        <name>Ca(2+)</name>
        <dbReference type="ChEBI" id="CHEBI:29108"/>
        <label>2</label>
    </ligand>
</feature>
<feature type="binding site" evidence="8">
    <location>
        <position position="189"/>
    </location>
    <ligand>
        <name>Ca(2+)</name>
        <dbReference type="ChEBI" id="CHEBI:29108"/>
        <label>2</label>
    </ligand>
</feature>
<feature type="binding site" evidence="8">
    <location>
        <position position="194"/>
    </location>
    <ligand>
        <name>Ca(2+)</name>
        <dbReference type="ChEBI" id="CHEBI:29108"/>
        <label>2</label>
    </ligand>
</feature>
<feature type="binding site" evidence="1">
    <location>
        <position position="306"/>
    </location>
    <ligand>
        <name>Ca(2+)</name>
        <dbReference type="ChEBI" id="CHEBI:29108"/>
        <label>3</label>
        <note>catalytic</note>
    </ligand>
</feature>
<feature type="binding site" evidence="1">
    <location>
        <position position="335"/>
    </location>
    <ligand>
        <name>Ca(2+)</name>
        <dbReference type="ChEBI" id="CHEBI:29108"/>
        <label>3</label>
        <note>catalytic</note>
    </ligand>
</feature>
<feature type="binding site" evidence="1">
    <location>
        <position position="337"/>
    </location>
    <ligand>
        <name>Ca(2+)</name>
        <dbReference type="ChEBI" id="CHEBI:29108"/>
        <label>3</label>
        <note>catalytic</note>
    </ligand>
</feature>
<feature type="binding site" evidence="1">
    <location>
        <position position="384"/>
    </location>
    <ligand>
        <name>Ca(2+)</name>
        <dbReference type="ChEBI" id="CHEBI:29108"/>
        <label>3</label>
        <note>catalytic</note>
    </ligand>
</feature>
<feature type="binding site" evidence="1">
    <location>
        <position position="433"/>
    </location>
    <ligand>
        <name>substrate</name>
    </ligand>
</feature>
<feature type="binding site" evidence="1">
    <location>
        <position position="435"/>
    </location>
    <ligand>
        <name>substrate</name>
    </ligand>
</feature>
<feature type="binding site" evidence="1">
    <location>
        <position position="551"/>
    </location>
    <ligand>
        <name>substrate</name>
    </ligand>
</feature>
<feature type="binding site" evidence="1">
    <location>
        <position position="578"/>
    </location>
    <ligand>
        <name>substrate</name>
    </ligand>
</feature>
<feature type="binding site" evidence="1">
    <location>
        <position position="679"/>
    </location>
    <ligand>
        <name>Ca(2+)</name>
        <dbReference type="ChEBI" id="CHEBI:29108"/>
        <label>4</label>
    </ligand>
</feature>
<feature type="binding site" evidence="1">
    <location>
        <position position="681"/>
    </location>
    <ligand>
        <name>Ca(2+)</name>
        <dbReference type="ChEBI" id="CHEBI:29108"/>
        <label>4</label>
    </ligand>
</feature>
<feature type="binding site" evidence="1">
    <location>
        <position position="705"/>
    </location>
    <ligand>
        <name>Ca(2+)</name>
        <dbReference type="ChEBI" id="CHEBI:29108"/>
        <label>4</label>
    </ligand>
</feature>
<feature type="binding site" evidence="1">
    <location>
        <position position="734"/>
    </location>
    <ligand>
        <name>Ca(2+)</name>
        <dbReference type="ChEBI" id="CHEBI:29108"/>
        <label>5</label>
    </ligand>
</feature>
<feature type="binding site" evidence="1">
    <location>
        <position position="735"/>
    </location>
    <ligand>
        <name>Ca(2+)</name>
        <dbReference type="ChEBI" id="CHEBI:29108"/>
        <label>5</label>
    </ligand>
</feature>
<feature type="binding site" evidence="1">
    <location>
        <position position="736"/>
    </location>
    <ligand>
        <name>Ca(2+)</name>
        <dbReference type="ChEBI" id="CHEBI:29108"/>
        <label>5</label>
    </ligand>
</feature>
<gene>
    <name type="primary">PLCD4</name>
    <name type="synonym">PLCD2</name>
</gene>
<dbReference type="EC" id="3.1.4.11" evidence="3"/>
<dbReference type="EMBL" id="BC112449">
    <property type="protein sequence ID" value="AAI12450.1"/>
    <property type="molecule type" value="mRNA"/>
</dbReference>
<dbReference type="RefSeq" id="NP_001039954.1">
    <property type="nucleotide sequence ID" value="NM_001046489.2"/>
</dbReference>
<dbReference type="SMR" id="P21671"/>
<dbReference type="FunCoup" id="P21671">
    <property type="interactions" value="115"/>
</dbReference>
<dbReference type="STRING" id="9913.ENSBTAP00000041545"/>
<dbReference type="PaxDb" id="9913-ENSBTAP00000041545"/>
<dbReference type="GeneID" id="540771"/>
<dbReference type="KEGG" id="bta:540771"/>
<dbReference type="CTD" id="84812"/>
<dbReference type="eggNOG" id="KOG0169">
    <property type="taxonomic scope" value="Eukaryota"/>
</dbReference>
<dbReference type="InParanoid" id="P21671"/>
<dbReference type="OrthoDB" id="269822at2759"/>
<dbReference type="Proteomes" id="UP000009136">
    <property type="component" value="Unplaced"/>
</dbReference>
<dbReference type="GO" id="GO:0005783">
    <property type="term" value="C:endoplasmic reticulum"/>
    <property type="evidence" value="ECO:0007669"/>
    <property type="project" value="UniProtKB-SubCell"/>
</dbReference>
<dbReference type="GO" id="GO:0005634">
    <property type="term" value="C:nucleus"/>
    <property type="evidence" value="ECO:0007669"/>
    <property type="project" value="UniProtKB-SubCell"/>
</dbReference>
<dbReference type="GO" id="GO:0005886">
    <property type="term" value="C:plasma membrane"/>
    <property type="evidence" value="ECO:0000318"/>
    <property type="project" value="GO_Central"/>
</dbReference>
<dbReference type="GO" id="GO:0005509">
    <property type="term" value="F:calcium ion binding"/>
    <property type="evidence" value="ECO:0007669"/>
    <property type="project" value="InterPro"/>
</dbReference>
<dbReference type="GO" id="GO:0001965">
    <property type="term" value="F:G-protein alpha-subunit binding"/>
    <property type="evidence" value="ECO:0000250"/>
    <property type="project" value="UniProtKB"/>
</dbReference>
<dbReference type="GO" id="GO:0004435">
    <property type="term" value="F:phosphatidylinositol-4,5-bisphosphate phospholipase C activity"/>
    <property type="evidence" value="ECO:0000318"/>
    <property type="project" value="GO_Central"/>
</dbReference>
<dbReference type="GO" id="GO:0035556">
    <property type="term" value="P:intracellular signal transduction"/>
    <property type="evidence" value="ECO:0007669"/>
    <property type="project" value="InterPro"/>
</dbReference>
<dbReference type="GO" id="GO:0016042">
    <property type="term" value="P:lipid catabolic process"/>
    <property type="evidence" value="ECO:0007669"/>
    <property type="project" value="UniProtKB-KW"/>
</dbReference>
<dbReference type="CDD" id="cd00275">
    <property type="entry name" value="C2_PLC_like"/>
    <property type="match status" value="1"/>
</dbReference>
<dbReference type="CDD" id="cd13363">
    <property type="entry name" value="PH_PLC_delta"/>
    <property type="match status" value="1"/>
</dbReference>
<dbReference type="FunFam" id="1.10.238.10:FF:000005">
    <property type="entry name" value="Phosphoinositide phospholipase C"/>
    <property type="match status" value="1"/>
</dbReference>
<dbReference type="FunFam" id="1.10.238.10:FF:000145">
    <property type="entry name" value="Phosphoinositide phospholipase C"/>
    <property type="match status" value="1"/>
</dbReference>
<dbReference type="FunFam" id="2.30.29.30:FF:000088">
    <property type="entry name" value="Phosphoinositide phospholipase C"/>
    <property type="match status" value="1"/>
</dbReference>
<dbReference type="FunFam" id="2.60.40.150:FF:000058">
    <property type="entry name" value="Phosphoinositide phospholipase C"/>
    <property type="match status" value="1"/>
</dbReference>
<dbReference type="Gene3D" id="2.60.40.150">
    <property type="entry name" value="C2 domain"/>
    <property type="match status" value="1"/>
</dbReference>
<dbReference type="Gene3D" id="1.10.238.10">
    <property type="entry name" value="EF-hand"/>
    <property type="match status" value="2"/>
</dbReference>
<dbReference type="Gene3D" id="3.20.20.190">
    <property type="entry name" value="Phosphatidylinositol (PI) phosphodiesterase"/>
    <property type="match status" value="1"/>
</dbReference>
<dbReference type="Gene3D" id="2.30.29.30">
    <property type="entry name" value="Pleckstrin-homology domain (PH domain)/Phosphotyrosine-binding domain (PTB)"/>
    <property type="match status" value="1"/>
</dbReference>
<dbReference type="InterPro" id="IPR000008">
    <property type="entry name" value="C2_dom"/>
</dbReference>
<dbReference type="InterPro" id="IPR035892">
    <property type="entry name" value="C2_domain_sf"/>
</dbReference>
<dbReference type="InterPro" id="IPR011992">
    <property type="entry name" value="EF-hand-dom_pair"/>
</dbReference>
<dbReference type="InterPro" id="IPR018247">
    <property type="entry name" value="EF_Hand_1_Ca_BS"/>
</dbReference>
<dbReference type="InterPro" id="IPR002048">
    <property type="entry name" value="EF_hand_dom"/>
</dbReference>
<dbReference type="InterPro" id="IPR011993">
    <property type="entry name" value="PH-like_dom_sf"/>
</dbReference>
<dbReference type="InterPro" id="IPR001849">
    <property type="entry name" value="PH_domain"/>
</dbReference>
<dbReference type="InterPro" id="IPR001192">
    <property type="entry name" value="PI-PLC_fam"/>
</dbReference>
<dbReference type="InterPro" id="IPR017946">
    <property type="entry name" value="PLC-like_Pdiesterase_TIM-brl"/>
</dbReference>
<dbReference type="InterPro" id="IPR015359">
    <property type="entry name" value="PLC_EF-hand-like"/>
</dbReference>
<dbReference type="InterPro" id="IPR000909">
    <property type="entry name" value="PLipase_C_PInositol-sp_X_dom"/>
</dbReference>
<dbReference type="InterPro" id="IPR001711">
    <property type="entry name" value="PLipase_C_Pinositol-sp_Y"/>
</dbReference>
<dbReference type="PANTHER" id="PTHR10336:SF31">
    <property type="entry name" value="1-PHOSPHATIDYLINOSITOL 4,5-BISPHOSPHATE PHOSPHODIESTERASE DELTA-4"/>
    <property type="match status" value="1"/>
</dbReference>
<dbReference type="PANTHER" id="PTHR10336">
    <property type="entry name" value="PHOSPHOINOSITIDE-SPECIFIC PHOSPHOLIPASE C FAMILY PROTEIN"/>
    <property type="match status" value="1"/>
</dbReference>
<dbReference type="Pfam" id="PF00168">
    <property type="entry name" value="C2"/>
    <property type="match status" value="1"/>
</dbReference>
<dbReference type="Pfam" id="PF09279">
    <property type="entry name" value="EF-hand_like"/>
    <property type="match status" value="1"/>
</dbReference>
<dbReference type="Pfam" id="PF00169">
    <property type="entry name" value="PH"/>
    <property type="match status" value="1"/>
</dbReference>
<dbReference type="Pfam" id="PF00388">
    <property type="entry name" value="PI-PLC-X"/>
    <property type="match status" value="1"/>
</dbReference>
<dbReference type="Pfam" id="PF00387">
    <property type="entry name" value="PI-PLC-Y"/>
    <property type="match status" value="1"/>
</dbReference>
<dbReference type="PRINTS" id="PR00390">
    <property type="entry name" value="PHPHLIPASEC"/>
</dbReference>
<dbReference type="SMART" id="SM00239">
    <property type="entry name" value="C2"/>
    <property type="match status" value="1"/>
</dbReference>
<dbReference type="SMART" id="SM00054">
    <property type="entry name" value="EFh"/>
    <property type="match status" value="3"/>
</dbReference>
<dbReference type="SMART" id="SM00233">
    <property type="entry name" value="PH"/>
    <property type="match status" value="1"/>
</dbReference>
<dbReference type="SMART" id="SM00148">
    <property type="entry name" value="PLCXc"/>
    <property type="match status" value="1"/>
</dbReference>
<dbReference type="SMART" id="SM00149">
    <property type="entry name" value="PLCYc"/>
    <property type="match status" value="1"/>
</dbReference>
<dbReference type="SUPFAM" id="SSF49562">
    <property type="entry name" value="C2 domain (Calcium/lipid-binding domain, CaLB)"/>
    <property type="match status" value="1"/>
</dbReference>
<dbReference type="SUPFAM" id="SSF47473">
    <property type="entry name" value="EF-hand"/>
    <property type="match status" value="1"/>
</dbReference>
<dbReference type="SUPFAM" id="SSF50729">
    <property type="entry name" value="PH domain-like"/>
    <property type="match status" value="1"/>
</dbReference>
<dbReference type="SUPFAM" id="SSF51695">
    <property type="entry name" value="PLC-like phosphodiesterases"/>
    <property type="match status" value="1"/>
</dbReference>
<dbReference type="PROSITE" id="PS50004">
    <property type="entry name" value="C2"/>
    <property type="match status" value="1"/>
</dbReference>
<dbReference type="PROSITE" id="PS00018">
    <property type="entry name" value="EF_HAND_1"/>
    <property type="match status" value="2"/>
</dbReference>
<dbReference type="PROSITE" id="PS50222">
    <property type="entry name" value="EF_HAND_2"/>
    <property type="match status" value="3"/>
</dbReference>
<dbReference type="PROSITE" id="PS50003">
    <property type="entry name" value="PH_DOMAIN"/>
    <property type="match status" value="1"/>
</dbReference>
<dbReference type="PROSITE" id="PS50007">
    <property type="entry name" value="PIPLC_X_DOMAIN"/>
    <property type="match status" value="1"/>
</dbReference>
<dbReference type="PROSITE" id="PS50008">
    <property type="entry name" value="PIPLC_Y_DOMAIN"/>
    <property type="match status" value="1"/>
</dbReference>
<name>PLCD4_BOVIN</name>